<name>PROF1_STRPU</name>
<sequence length="142" mass="15282">MSWDSYVDNLIAQSKDASGTTHCDKACIIGKDGSAWTTMPTSDTSNNLKLTPEEMANIAKCFKSKDFAAFMSSGIYVNGTKYQFLREEDSKLVLGKKKGEGSLTLQSSKTAIVIGHCPEGGQQGNLNKAVGVIAEYLESLSM</sequence>
<organism>
    <name type="scientific">Strongylocentrotus purpuratus</name>
    <name type="common">Purple sea urchin</name>
    <dbReference type="NCBI Taxonomy" id="7668"/>
    <lineage>
        <taxon>Eukaryota</taxon>
        <taxon>Metazoa</taxon>
        <taxon>Echinodermata</taxon>
        <taxon>Eleutherozoa</taxon>
        <taxon>Echinozoa</taxon>
        <taxon>Echinoidea</taxon>
        <taxon>Euechinoidea</taxon>
        <taxon>Echinacea</taxon>
        <taxon>Camarodonta</taxon>
        <taxon>Echinidea</taxon>
        <taxon>Strongylocentrotidae</taxon>
        <taxon>Strongylocentrotus</taxon>
    </lineage>
</organism>
<feature type="initiator methionine" description="Removed" evidence="1">
    <location>
        <position position="1"/>
    </location>
</feature>
<feature type="chain" id="PRO_0000199602" description="Profilin">
    <location>
        <begin position="2"/>
        <end position="142"/>
    </location>
</feature>
<accession>P32006</accession>
<dbReference type="EMBL" id="S42185">
    <property type="protein sequence ID" value="AAB22843.1"/>
    <property type="molecule type" value="mRNA"/>
</dbReference>
<dbReference type="PIR" id="A44777">
    <property type="entry name" value="A44777"/>
</dbReference>
<dbReference type="RefSeq" id="NP_999760.1">
    <property type="nucleotide sequence ID" value="NM_214595.1"/>
</dbReference>
<dbReference type="SMR" id="P32006"/>
<dbReference type="STRING" id="7668.P32006"/>
<dbReference type="EnsemblMetazoa" id="NM_214595">
    <property type="protein sequence ID" value="NP_999760"/>
    <property type="gene ID" value="GeneID_373409"/>
</dbReference>
<dbReference type="GeneID" id="373409"/>
<dbReference type="KEGG" id="spu:373409"/>
<dbReference type="CTD" id="373409"/>
<dbReference type="eggNOG" id="KOG1755">
    <property type="taxonomic scope" value="Eukaryota"/>
</dbReference>
<dbReference type="HOGENOM" id="CLU_2471924_0_0_1"/>
<dbReference type="InParanoid" id="P32006"/>
<dbReference type="OMA" id="WTTAGHA"/>
<dbReference type="OrthoDB" id="421374at2759"/>
<dbReference type="PhylomeDB" id="P32006"/>
<dbReference type="Proteomes" id="UP000007110">
    <property type="component" value="Unassembled WGS sequence"/>
</dbReference>
<dbReference type="GO" id="GO:0005938">
    <property type="term" value="C:cell cortex"/>
    <property type="evidence" value="ECO:0000318"/>
    <property type="project" value="GO_Central"/>
</dbReference>
<dbReference type="GO" id="GO:0005856">
    <property type="term" value="C:cytoskeleton"/>
    <property type="evidence" value="ECO:0007669"/>
    <property type="project" value="UniProtKB-SubCell"/>
</dbReference>
<dbReference type="GO" id="GO:0003785">
    <property type="term" value="F:actin monomer binding"/>
    <property type="evidence" value="ECO:0000318"/>
    <property type="project" value="GO_Central"/>
</dbReference>
<dbReference type="GO" id="GO:0051128">
    <property type="term" value="P:regulation of cellular component organization"/>
    <property type="evidence" value="ECO:0007669"/>
    <property type="project" value="UniProtKB-ARBA"/>
</dbReference>
<dbReference type="CDD" id="cd00148">
    <property type="entry name" value="PROF"/>
    <property type="match status" value="1"/>
</dbReference>
<dbReference type="FunFam" id="3.30.450.30:FF:000020">
    <property type="entry name" value="Profilin"/>
    <property type="match status" value="1"/>
</dbReference>
<dbReference type="Gene3D" id="3.30.450.30">
    <property type="entry name" value="Dynein light chain 2a, cytoplasmic"/>
    <property type="match status" value="1"/>
</dbReference>
<dbReference type="InterPro" id="IPR048278">
    <property type="entry name" value="PFN"/>
</dbReference>
<dbReference type="InterPro" id="IPR005455">
    <property type="entry name" value="PFN_euk"/>
</dbReference>
<dbReference type="InterPro" id="IPR036140">
    <property type="entry name" value="PFN_sf"/>
</dbReference>
<dbReference type="InterPro" id="IPR027310">
    <property type="entry name" value="Profilin_CS"/>
</dbReference>
<dbReference type="PANTHER" id="PTHR11604">
    <property type="entry name" value="PROFILIN"/>
    <property type="match status" value="1"/>
</dbReference>
<dbReference type="PANTHER" id="PTHR11604:SF10">
    <property type="entry name" value="PROFILIN"/>
    <property type="match status" value="1"/>
</dbReference>
<dbReference type="Pfam" id="PF00235">
    <property type="entry name" value="Profilin"/>
    <property type="match status" value="1"/>
</dbReference>
<dbReference type="PRINTS" id="PR00392">
    <property type="entry name" value="PROFILIN"/>
</dbReference>
<dbReference type="SMART" id="SM00392">
    <property type="entry name" value="PROF"/>
    <property type="match status" value="1"/>
</dbReference>
<dbReference type="SUPFAM" id="SSF55770">
    <property type="entry name" value="Profilin (actin-binding protein)"/>
    <property type="match status" value="1"/>
</dbReference>
<dbReference type="PROSITE" id="PS00414">
    <property type="entry name" value="PROFILIN"/>
    <property type="match status" value="1"/>
</dbReference>
<proteinExistence type="evidence at transcript level"/>
<protein>
    <recommendedName>
        <fullName>Profilin</fullName>
    </recommendedName>
    <alternativeName>
        <fullName>SpCoel1</fullName>
    </alternativeName>
</protein>
<keyword id="KW-0009">Actin-binding</keyword>
<keyword id="KW-0963">Cytoplasm</keyword>
<keyword id="KW-0206">Cytoskeleton</keyword>
<keyword id="KW-1185">Reference proteome</keyword>
<evidence type="ECO:0000250" key="1"/>
<evidence type="ECO:0000305" key="2"/>
<comment type="function">
    <text>Binds to actin and affects the structure of the cytoskeleton. At high concentrations, profilin prevents the polymerization of actin, whereas it enhances it at low concentrations. By binding to PIP2, it inhibits the formation of IP3 and DG.</text>
</comment>
<comment type="subunit">
    <text>Occurs in many kinds of cells as a complex with monomeric actin in a 1:1 ratio.</text>
</comment>
<comment type="subcellular location">
    <subcellularLocation>
        <location>Cytoplasm</location>
        <location>Cytoskeleton</location>
    </subcellularLocation>
</comment>
<comment type="tissue specificity">
    <text>Expressed specifically in coelomocytes in response to injury.</text>
</comment>
<comment type="similarity">
    <text evidence="2">Belongs to the profilin family.</text>
</comment>
<reference key="1">
    <citation type="journal article" date="1992" name="Mol. Biol. Cell">
        <title>SpCoel1: a sea urchin profilin gene expressed specifically in coelomocytes in response to injury.</title>
        <authorList>
            <person name="Smith L.C."/>
            <person name="Britten R.J."/>
            <person name="Davidson E.H."/>
        </authorList>
    </citation>
    <scope>NUCLEOTIDE SEQUENCE [MRNA]</scope>
</reference>